<dbReference type="EC" id="6.1.1.1" evidence="1"/>
<dbReference type="EMBL" id="CP000102">
    <property type="protein sequence ID" value="ABC56762.1"/>
    <property type="molecule type" value="Genomic_DNA"/>
</dbReference>
<dbReference type="RefSeq" id="WP_011405962.1">
    <property type="nucleotide sequence ID" value="NC_007681.1"/>
</dbReference>
<dbReference type="SMR" id="Q2NHE1"/>
<dbReference type="STRING" id="339860.Msp_0359"/>
<dbReference type="KEGG" id="mst:Msp_0359"/>
<dbReference type="eggNOG" id="arCOG01886">
    <property type="taxonomic scope" value="Archaea"/>
</dbReference>
<dbReference type="HOGENOM" id="CLU_035267_0_1_2"/>
<dbReference type="OrthoDB" id="8389at2157"/>
<dbReference type="Proteomes" id="UP000001931">
    <property type="component" value="Chromosome"/>
</dbReference>
<dbReference type="GO" id="GO:0005737">
    <property type="term" value="C:cytoplasm"/>
    <property type="evidence" value="ECO:0007669"/>
    <property type="project" value="UniProtKB-SubCell"/>
</dbReference>
<dbReference type="GO" id="GO:0005524">
    <property type="term" value="F:ATP binding"/>
    <property type="evidence" value="ECO:0007669"/>
    <property type="project" value="UniProtKB-UniRule"/>
</dbReference>
<dbReference type="GO" id="GO:0004831">
    <property type="term" value="F:tyrosine-tRNA ligase activity"/>
    <property type="evidence" value="ECO:0007669"/>
    <property type="project" value="UniProtKB-UniRule"/>
</dbReference>
<dbReference type="GO" id="GO:0006437">
    <property type="term" value="P:tyrosyl-tRNA aminoacylation"/>
    <property type="evidence" value="ECO:0007669"/>
    <property type="project" value="UniProtKB-UniRule"/>
</dbReference>
<dbReference type="Gene3D" id="3.40.50.620">
    <property type="entry name" value="HUPs"/>
    <property type="match status" value="1"/>
</dbReference>
<dbReference type="Gene3D" id="1.10.240.10">
    <property type="entry name" value="Tyrosyl-Transfer RNA Synthetase"/>
    <property type="match status" value="1"/>
</dbReference>
<dbReference type="HAMAP" id="MF_02008">
    <property type="entry name" value="Tyr_tRNA_synth_type3"/>
    <property type="match status" value="1"/>
</dbReference>
<dbReference type="InterPro" id="IPR001412">
    <property type="entry name" value="aa-tRNA-synth_I_CS"/>
</dbReference>
<dbReference type="InterPro" id="IPR002305">
    <property type="entry name" value="aa-tRNA-synth_Ic"/>
</dbReference>
<dbReference type="InterPro" id="IPR014729">
    <property type="entry name" value="Rossmann-like_a/b/a_fold"/>
</dbReference>
<dbReference type="InterPro" id="IPR002307">
    <property type="entry name" value="Tyr-tRNA-ligase"/>
</dbReference>
<dbReference type="InterPro" id="IPR023684">
    <property type="entry name" value="Tyr-tRNA-ligase_3"/>
</dbReference>
<dbReference type="InterPro" id="IPR023617">
    <property type="entry name" value="Tyr-tRNA-ligase_arc/euk-type"/>
</dbReference>
<dbReference type="InterPro" id="IPR050489">
    <property type="entry name" value="Tyr-tRNA_synthase"/>
</dbReference>
<dbReference type="NCBIfam" id="NF006330">
    <property type="entry name" value="PRK08560.1"/>
    <property type="match status" value="1"/>
</dbReference>
<dbReference type="NCBIfam" id="TIGR00234">
    <property type="entry name" value="tyrS"/>
    <property type="match status" value="1"/>
</dbReference>
<dbReference type="PANTHER" id="PTHR46264:SF4">
    <property type="entry name" value="TYROSINE--TRNA LIGASE, CYTOPLASMIC"/>
    <property type="match status" value="1"/>
</dbReference>
<dbReference type="PANTHER" id="PTHR46264">
    <property type="entry name" value="TYROSINE-TRNA LIGASE"/>
    <property type="match status" value="1"/>
</dbReference>
<dbReference type="Pfam" id="PF00579">
    <property type="entry name" value="tRNA-synt_1b"/>
    <property type="match status" value="1"/>
</dbReference>
<dbReference type="PIRSF" id="PIRSF006588">
    <property type="entry name" value="TyrRS_arch_euk"/>
    <property type="match status" value="1"/>
</dbReference>
<dbReference type="PRINTS" id="PR01040">
    <property type="entry name" value="TRNASYNTHTYR"/>
</dbReference>
<dbReference type="SUPFAM" id="SSF52374">
    <property type="entry name" value="Nucleotidylyl transferase"/>
    <property type="match status" value="1"/>
</dbReference>
<dbReference type="PROSITE" id="PS00178">
    <property type="entry name" value="AA_TRNA_LIGASE_I"/>
    <property type="match status" value="1"/>
</dbReference>
<name>SYY_METST</name>
<protein>
    <recommendedName>
        <fullName evidence="1">Tyrosine--tRNA ligase</fullName>
        <ecNumber evidence="1">6.1.1.1</ecNumber>
    </recommendedName>
    <alternativeName>
        <fullName evidence="1">Tyrosyl-tRNA synthetase</fullName>
        <shortName evidence="1">TyrRS</shortName>
    </alternativeName>
</protein>
<proteinExistence type="inferred from homology"/>
<gene>
    <name evidence="1" type="primary">tyrS</name>
    <name type="ordered locus">Msp_0359</name>
</gene>
<keyword id="KW-0030">Aminoacyl-tRNA synthetase</keyword>
<keyword id="KW-0067">ATP-binding</keyword>
<keyword id="KW-0963">Cytoplasm</keyword>
<keyword id="KW-0436">Ligase</keyword>
<keyword id="KW-0547">Nucleotide-binding</keyword>
<keyword id="KW-0648">Protein biosynthesis</keyword>
<keyword id="KW-1185">Reference proteome</keyword>
<comment type="function">
    <text evidence="1">Catalyzes the attachment of tyrosine to tRNA(Tyr) in a two-step reaction: tyrosine is first activated by ATP to form Tyr-AMP and then transferred to the acceptor end of tRNA(Tyr).</text>
</comment>
<comment type="catalytic activity">
    <reaction evidence="1">
        <text>tRNA(Tyr) + L-tyrosine + ATP = L-tyrosyl-tRNA(Tyr) + AMP + diphosphate + H(+)</text>
        <dbReference type="Rhea" id="RHEA:10220"/>
        <dbReference type="Rhea" id="RHEA-COMP:9706"/>
        <dbReference type="Rhea" id="RHEA-COMP:9707"/>
        <dbReference type="ChEBI" id="CHEBI:15378"/>
        <dbReference type="ChEBI" id="CHEBI:30616"/>
        <dbReference type="ChEBI" id="CHEBI:33019"/>
        <dbReference type="ChEBI" id="CHEBI:58315"/>
        <dbReference type="ChEBI" id="CHEBI:78442"/>
        <dbReference type="ChEBI" id="CHEBI:78536"/>
        <dbReference type="ChEBI" id="CHEBI:456215"/>
        <dbReference type="EC" id="6.1.1.1"/>
    </reaction>
</comment>
<comment type="subunit">
    <text evidence="1">Homodimer.</text>
</comment>
<comment type="subcellular location">
    <subcellularLocation>
        <location evidence="1">Cytoplasm</location>
    </subcellularLocation>
</comment>
<comment type="similarity">
    <text evidence="1">Belongs to the class-I aminoacyl-tRNA synthetase family. TyrS type 3 subfamily.</text>
</comment>
<feature type="chain" id="PRO_0000240259" description="Tyrosine--tRNA ligase">
    <location>
        <begin position="1"/>
        <end position="318"/>
    </location>
</feature>
<feature type="short sequence motif" description="'HIGH' region">
    <location>
        <begin position="40"/>
        <end position="48"/>
    </location>
</feature>
<feature type="short sequence motif" description="'KMSKS' region">
    <location>
        <begin position="211"/>
        <end position="215"/>
    </location>
</feature>
<feature type="binding site" evidence="1">
    <location>
        <position position="35"/>
    </location>
    <ligand>
        <name>L-tyrosine</name>
        <dbReference type="ChEBI" id="CHEBI:58315"/>
    </ligand>
</feature>
<feature type="binding site" evidence="1">
    <location>
        <position position="154"/>
    </location>
    <ligand>
        <name>L-tyrosine</name>
        <dbReference type="ChEBI" id="CHEBI:58315"/>
    </ligand>
</feature>
<feature type="binding site" evidence="1">
    <location>
        <position position="158"/>
    </location>
    <ligand>
        <name>L-tyrosine</name>
        <dbReference type="ChEBI" id="CHEBI:58315"/>
    </ligand>
</feature>
<feature type="binding site" evidence="1">
    <location>
        <position position="161"/>
    </location>
    <ligand>
        <name>L-tyrosine</name>
        <dbReference type="ChEBI" id="CHEBI:58315"/>
    </ligand>
</feature>
<feature type="binding site" evidence="1">
    <location>
        <position position="176"/>
    </location>
    <ligand>
        <name>L-tyrosine</name>
        <dbReference type="ChEBI" id="CHEBI:58315"/>
    </ligand>
</feature>
<feature type="binding site" evidence="1">
    <location>
        <position position="214"/>
    </location>
    <ligand>
        <name>ATP</name>
        <dbReference type="ChEBI" id="CHEBI:30616"/>
    </ligand>
</feature>
<sequence length="318" mass="36106">MDIDASVENISKDTAEIIEVEELKELLKKDEKRAYVGFEPSGKVHLGHALTIKKMKTLQDAGFKITIFIANLHAYLNNKGTLDELNEVAKYNIKCFKALGLSEDTNFILGSDRMTPEYITEVFKAAKLTTIQRAQRSMALVSRNETHDVAQTLYPIMQALDIHDLDADIAVGGMEQRKIHMLAREILPRLGYRPPVCIHIPLIHGTDGSDKMSSSKGNFIAIDDTPKEIKNKINKSFCPIGVSEDNPVMEIAHYYIFDTHEKILIERPEKFGGNLELTEEELIQTYENEDLHPMDLKNTVSKYLIERLAPAREYMENN</sequence>
<reference key="1">
    <citation type="journal article" date="2006" name="J. Bacteriol.">
        <title>The genome sequence of Methanosphaera stadtmanae reveals why this human intestinal archaeon is restricted to methanol and H2 for methane formation and ATP synthesis.</title>
        <authorList>
            <person name="Fricke W.F."/>
            <person name="Seedorf H."/>
            <person name="Henne A."/>
            <person name="Kruer M."/>
            <person name="Liesegang H."/>
            <person name="Hedderich R."/>
            <person name="Gottschalk G."/>
            <person name="Thauer R.K."/>
        </authorList>
    </citation>
    <scope>NUCLEOTIDE SEQUENCE [LARGE SCALE GENOMIC DNA]</scope>
    <source>
        <strain>ATCC 43021 / DSM 3091 / JCM 11832 / MCB-3</strain>
    </source>
</reference>
<evidence type="ECO:0000255" key="1">
    <source>
        <dbReference type="HAMAP-Rule" id="MF_02008"/>
    </source>
</evidence>
<accession>Q2NHE1</accession>
<organism>
    <name type="scientific">Methanosphaera stadtmanae (strain ATCC 43021 / DSM 3091 / JCM 11832 / MCB-3)</name>
    <dbReference type="NCBI Taxonomy" id="339860"/>
    <lineage>
        <taxon>Archaea</taxon>
        <taxon>Methanobacteriati</taxon>
        <taxon>Methanobacteriota</taxon>
        <taxon>Methanomada group</taxon>
        <taxon>Methanobacteria</taxon>
        <taxon>Methanobacteriales</taxon>
        <taxon>Methanobacteriaceae</taxon>
        <taxon>Methanosphaera</taxon>
    </lineage>
</organism>